<dbReference type="EMBL" id="CP001096">
    <property type="protein sequence ID" value="ACF02144.1"/>
    <property type="molecule type" value="Genomic_DNA"/>
</dbReference>
<dbReference type="RefSeq" id="WP_011158773.1">
    <property type="nucleotide sequence ID" value="NC_011004.1"/>
</dbReference>
<dbReference type="SMR" id="B3QBV7"/>
<dbReference type="GeneID" id="66894314"/>
<dbReference type="KEGG" id="rpt:Rpal_3644"/>
<dbReference type="HOGENOM" id="CLU_103849_1_2_5"/>
<dbReference type="OrthoDB" id="9803610at2"/>
<dbReference type="Proteomes" id="UP000001725">
    <property type="component" value="Chromosome"/>
</dbReference>
<dbReference type="GO" id="GO:0005829">
    <property type="term" value="C:cytosol"/>
    <property type="evidence" value="ECO:0007669"/>
    <property type="project" value="TreeGrafter"/>
</dbReference>
<dbReference type="GO" id="GO:0015935">
    <property type="term" value="C:small ribosomal subunit"/>
    <property type="evidence" value="ECO:0007669"/>
    <property type="project" value="TreeGrafter"/>
</dbReference>
<dbReference type="GO" id="GO:0019843">
    <property type="term" value="F:rRNA binding"/>
    <property type="evidence" value="ECO:0007669"/>
    <property type="project" value="UniProtKB-UniRule"/>
</dbReference>
<dbReference type="GO" id="GO:0003735">
    <property type="term" value="F:structural constituent of ribosome"/>
    <property type="evidence" value="ECO:0007669"/>
    <property type="project" value="InterPro"/>
</dbReference>
<dbReference type="GO" id="GO:0000049">
    <property type="term" value="F:tRNA binding"/>
    <property type="evidence" value="ECO:0007669"/>
    <property type="project" value="UniProtKB-UniRule"/>
</dbReference>
<dbReference type="GO" id="GO:0006412">
    <property type="term" value="P:translation"/>
    <property type="evidence" value="ECO:0007669"/>
    <property type="project" value="UniProtKB-UniRule"/>
</dbReference>
<dbReference type="FunFam" id="1.10.8.50:FF:000001">
    <property type="entry name" value="30S ribosomal protein S13"/>
    <property type="match status" value="1"/>
</dbReference>
<dbReference type="FunFam" id="4.10.910.10:FF:000001">
    <property type="entry name" value="30S ribosomal protein S13"/>
    <property type="match status" value="1"/>
</dbReference>
<dbReference type="Gene3D" id="1.10.8.50">
    <property type="match status" value="1"/>
</dbReference>
<dbReference type="Gene3D" id="4.10.910.10">
    <property type="entry name" value="30s ribosomal protein s13, domain 2"/>
    <property type="match status" value="1"/>
</dbReference>
<dbReference type="HAMAP" id="MF_01315">
    <property type="entry name" value="Ribosomal_uS13"/>
    <property type="match status" value="1"/>
</dbReference>
<dbReference type="InterPro" id="IPR027437">
    <property type="entry name" value="Rbsml_uS13_C"/>
</dbReference>
<dbReference type="InterPro" id="IPR001892">
    <property type="entry name" value="Ribosomal_uS13"/>
</dbReference>
<dbReference type="InterPro" id="IPR010979">
    <property type="entry name" value="Ribosomal_uS13-like_H2TH"/>
</dbReference>
<dbReference type="InterPro" id="IPR019980">
    <property type="entry name" value="Ribosomal_uS13_bac-type"/>
</dbReference>
<dbReference type="InterPro" id="IPR018269">
    <property type="entry name" value="Ribosomal_uS13_CS"/>
</dbReference>
<dbReference type="NCBIfam" id="TIGR03631">
    <property type="entry name" value="uS13_bact"/>
    <property type="match status" value="1"/>
</dbReference>
<dbReference type="PANTHER" id="PTHR10871">
    <property type="entry name" value="30S RIBOSOMAL PROTEIN S13/40S RIBOSOMAL PROTEIN S18"/>
    <property type="match status" value="1"/>
</dbReference>
<dbReference type="PANTHER" id="PTHR10871:SF1">
    <property type="entry name" value="SMALL RIBOSOMAL SUBUNIT PROTEIN US13M"/>
    <property type="match status" value="1"/>
</dbReference>
<dbReference type="Pfam" id="PF00416">
    <property type="entry name" value="Ribosomal_S13"/>
    <property type="match status" value="1"/>
</dbReference>
<dbReference type="PIRSF" id="PIRSF002134">
    <property type="entry name" value="Ribosomal_S13"/>
    <property type="match status" value="1"/>
</dbReference>
<dbReference type="SUPFAM" id="SSF46946">
    <property type="entry name" value="S13-like H2TH domain"/>
    <property type="match status" value="1"/>
</dbReference>
<dbReference type="PROSITE" id="PS00646">
    <property type="entry name" value="RIBOSOMAL_S13_1"/>
    <property type="match status" value="1"/>
</dbReference>
<dbReference type="PROSITE" id="PS50159">
    <property type="entry name" value="RIBOSOMAL_S13_2"/>
    <property type="match status" value="1"/>
</dbReference>
<organism>
    <name type="scientific">Rhodopseudomonas palustris (strain TIE-1)</name>
    <dbReference type="NCBI Taxonomy" id="395960"/>
    <lineage>
        <taxon>Bacteria</taxon>
        <taxon>Pseudomonadati</taxon>
        <taxon>Pseudomonadota</taxon>
        <taxon>Alphaproteobacteria</taxon>
        <taxon>Hyphomicrobiales</taxon>
        <taxon>Nitrobacteraceae</taxon>
        <taxon>Rhodopseudomonas</taxon>
    </lineage>
</organism>
<protein>
    <recommendedName>
        <fullName evidence="1">Small ribosomal subunit protein uS13</fullName>
    </recommendedName>
    <alternativeName>
        <fullName evidence="3">30S ribosomal protein S13</fullName>
    </alternativeName>
</protein>
<sequence>MARIAGVNIPTNKRVLIALQYIHGIGQKNAADILEKVKIPLDRRVNQLSDAEVLQIREVIDRDYLVEGDLRRETGMNIKRLMDLGCYRGLRHRRGLPVRGQRTHTNARTRKGPAKAIAGKKK</sequence>
<accession>B3QBV7</accession>
<name>RS13_RHOPT</name>
<reference key="1">
    <citation type="submission" date="2008-05" db="EMBL/GenBank/DDBJ databases">
        <title>Complete sequence of Rhodopseudomonas palustris TIE-1.</title>
        <authorList>
            <consortium name="US DOE Joint Genome Institute"/>
            <person name="Lucas S."/>
            <person name="Copeland A."/>
            <person name="Lapidus A."/>
            <person name="Glavina del Rio T."/>
            <person name="Dalin E."/>
            <person name="Tice H."/>
            <person name="Pitluck S."/>
            <person name="Chain P."/>
            <person name="Malfatti S."/>
            <person name="Shin M."/>
            <person name="Vergez L."/>
            <person name="Lang D."/>
            <person name="Schmutz J."/>
            <person name="Larimer F."/>
            <person name="Land M."/>
            <person name="Hauser L."/>
            <person name="Kyrpides N."/>
            <person name="Mikhailova N."/>
            <person name="Emerson D."/>
            <person name="Newman D.K."/>
            <person name="Roden E."/>
            <person name="Richardson P."/>
        </authorList>
    </citation>
    <scope>NUCLEOTIDE SEQUENCE [LARGE SCALE GENOMIC DNA]</scope>
    <source>
        <strain>TIE-1</strain>
    </source>
</reference>
<keyword id="KW-0687">Ribonucleoprotein</keyword>
<keyword id="KW-0689">Ribosomal protein</keyword>
<keyword id="KW-0694">RNA-binding</keyword>
<keyword id="KW-0699">rRNA-binding</keyword>
<keyword id="KW-0820">tRNA-binding</keyword>
<comment type="function">
    <text evidence="1">Located at the top of the head of the 30S subunit, it contacts several helices of the 16S rRNA. In the 70S ribosome it contacts the 23S rRNA (bridge B1a) and protein L5 of the 50S subunit (bridge B1b), connecting the 2 subunits; these bridges are implicated in subunit movement. Contacts the tRNAs in the A and P-sites.</text>
</comment>
<comment type="subunit">
    <text evidence="1">Part of the 30S ribosomal subunit. Forms a loose heterodimer with protein S19. Forms two bridges to the 50S subunit in the 70S ribosome.</text>
</comment>
<comment type="similarity">
    <text evidence="1">Belongs to the universal ribosomal protein uS13 family.</text>
</comment>
<feature type="chain" id="PRO_1000141309" description="Small ribosomal subunit protein uS13">
    <location>
        <begin position="1"/>
        <end position="122"/>
    </location>
</feature>
<feature type="region of interest" description="Disordered" evidence="2">
    <location>
        <begin position="99"/>
        <end position="122"/>
    </location>
</feature>
<proteinExistence type="inferred from homology"/>
<gene>
    <name evidence="1" type="primary">rpsM</name>
    <name type="ordered locus">Rpal_3644</name>
</gene>
<evidence type="ECO:0000255" key="1">
    <source>
        <dbReference type="HAMAP-Rule" id="MF_01315"/>
    </source>
</evidence>
<evidence type="ECO:0000256" key="2">
    <source>
        <dbReference type="SAM" id="MobiDB-lite"/>
    </source>
</evidence>
<evidence type="ECO:0000305" key="3"/>